<gene>
    <name evidence="1" type="primary">ilvD1</name>
    <name type="synonym">ilvD</name>
    <name type="ordered locus">mlr5361</name>
</gene>
<protein>
    <recommendedName>
        <fullName evidence="1">Dihydroxy-acid dehydratase 1</fullName>
        <shortName evidence="1">DAD 1</shortName>
        <ecNumber evidence="1">4.2.1.9</ecNumber>
    </recommendedName>
</protein>
<dbReference type="EC" id="4.2.1.9" evidence="1"/>
<dbReference type="EMBL" id="BA000012">
    <property type="protein sequence ID" value="BAB51823.1"/>
    <property type="molecule type" value="Genomic_DNA"/>
</dbReference>
<dbReference type="RefSeq" id="WP_010913162.1">
    <property type="nucleotide sequence ID" value="NC_002678.2"/>
</dbReference>
<dbReference type="SMR" id="Q98BZ8"/>
<dbReference type="GeneID" id="66680476"/>
<dbReference type="KEGG" id="mlo:mlr5361"/>
<dbReference type="eggNOG" id="COG0129">
    <property type="taxonomic scope" value="Bacteria"/>
</dbReference>
<dbReference type="HOGENOM" id="CLU_014271_4_2_5"/>
<dbReference type="UniPathway" id="UPA00047">
    <property type="reaction ID" value="UER00057"/>
</dbReference>
<dbReference type="UniPathway" id="UPA00049">
    <property type="reaction ID" value="UER00061"/>
</dbReference>
<dbReference type="Proteomes" id="UP000000552">
    <property type="component" value="Chromosome"/>
</dbReference>
<dbReference type="GO" id="GO:0005829">
    <property type="term" value="C:cytosol"/>
    <property type="evidence" value="ECO:0007669"/>
    <property type="project" value="TreeGrafter"/>
</dbReference>
<dbReference type="GO" id="GO:0051537">
    <property type="term" value="F:2 iron, 2 sulfur cluster binding"/>
    <property type="evidence" value="ECO:0007669"/>
    <property type="project" value="UniProtKB-UniRule"/>
</dbReference>
<dbReference type="GO" id="GO:0004160">
    <property type="term" value="F:dihydroxy-acid dehydratase activity"/>
    <property type="evidence" value="ECO:0007669"/>
    <property type="project" value="UniProtKB-UniRule"/>
</dbReference>
<dbReference type="GO" id="GO:0000287">
    <property type="term" value="F:magnesium ion binding"/>
    <property type="evidence" value="ECO:0007669"/>
    <property type="project" value="UniProtKB-UniRule"/>
</dbReference>
<dbReference type="GO" id="GO:0009097">
    <property type="term" value="P:isoleucine biosynthetic process"/>
    <property type="evidence" value="ECO:0007669"/>
    <property type="project" value="UniProtKB-UniRule"/>
</dbReference>
<dbReference type="GO" id="GO:0009099">
    <property type="term" value="P:L-valine biosynthetic process"/>
    <property type="evidence" value="ECO:0007669"/>
    <property type="project" value="UniProtKB-UniRule"/>
</dbReference>
<dbReference type="FunFam" id="3.50.30.80:FF:000001">
    <property type="entry name" value="Dihydroxy-acid dehydratase"/>
    <property type="match status" value="1"/>
</dbReference>
<dbReference type="Gene3D" id="3.50.30.80">
    <property type="entry name" value="IlvD/EDD C-terminal domain-like"/>
    <property type="match status" value="1"/>
</dbReference>
<dbReference type="HAMAP" id="MF_00012">
    <property type="entry name" value="IlvD"/>
    <property type="match status" value="1"/>
</dbReference>
<dbReference type="InterPro" id="IPR042096">
    <property type="entry name" value="Dihydro-acid_dehy_C"/>
</dbReference>
<dbReference type="InterPro" id="IPR004404">
    <property type="entry name" value="DihydroxyA_deHydtase"/>
</dbReference>
<dbReference type="InterPro" id="IPR020558">
    <property type="entry name" value="DiOHA_6PGluconate_deHydtase_CS"/>
</dbReference>
<dbReference type="InterPro" id="IPR056740">
    <property type="entry name" value="ILV_EDD_C"/>
</dbReference>
<dbReference type="InterPro" id="IPR000581">
    <property type="entry name" value="ILV_EDD_N"/>
</dbReference>
<dbReference type="InterPro" id="IPR037237">
    <property type="entry name" value="IlvD/EDD_N"/>
</dbReference>
<dbReference type="NCBIfam" id="TIGR00110">
    <property type="entry name" value="ilvD"/>
    <property type="match status" value="1"/>
</dbReference>
<dbReference type="NCBIfam" id="NF009103">
    <property type="entry name" value="PRK12448.1"/>
    <property type="match status" value="1"/>
</dbReference>
<dbReference type="PANTHER" id="PTHR43661">
    <property type="entry name" value="D-XYLONATE DEHYDRATASE"/>
    <property type="match status" value="1"/>
</dbReference>
<dbReference type="PANTHER" id="PTHR43661:SF3">
    <property type="entry name" value="D-XYLONATE DEHYDRATASE YAGF-RELATED"/>
    <property type="match status" value="1"/>
</dbReference>
<dbReference type="Pfam" id="PF24877">
    <property type="entry name" value="ILV_EDD_C"/>
    <property type="match status" value="1"/>
</dbReference>
<dbReference type="Pfam" id="PF00920">
    <property type="entry name" value="ILVD_EDD_N"/>
    <property type="match status" value="1"/>
</dbReference>
<dbReference type="SUPFAM" id="SSF143975">
    <property type="entry name" value="IlvD/EDD N-terminal domain-like"/>
    <property type="match status" value="1"/>
</dbReference>
<dbReference type="SUPFAM" id="SSF52016">
    <property type="entry name" value="LeuD/IlvD-like"/>
    <property type="match status" value="1"/>
</dbReference>
<dbReference type="PROSITE" id="PS00886">
    <property type="entry name" value="ILVD_EDD_1"/>
    <property type="match status" value="1"/>
</dbReference>
<dbReference type="PROSITE" id="PS00887">
    <property type="entry name" value="ILVD_EDD_2"/>
    <property type="match status" value="1"/>
</dbReference>
<sequence length="614" mass="65367">MPAYRSRTTTHGRNMAGARGLWRATGMKDSDFGKPIIAVVNSFTQFVPGHVHLKDLGQLVAREIEKAGGVAKEFNTIAVDDGIAMGHDGMLYSLPSRELIADSVEYMVNAHCADAMVCISNCDKITPGMLMASLRLNIPTVFVSGGPMEAGKVVLAGKTQALDLVDAMVAAADDKISDEDVKVIERSACPTCGSCSGMFTANSMNCLTEALGLSLPGNGSTLATHADRKRLFVEAGHLIVDLAQRYYEQDDETALPRSIASKGAFENAMTLDIAMGGSTNTVLHILAAAHEGEVDFTMEDIDRLSRRVPVLCKVAPAKSDVHMEDVHRAGGIMAILGQLDNAGLINRDLPTVHTSSLGEALDHWDISRTSSQNVRDFFLAAPGGVPTQVAFSQDRRWDELDLDREKGVIRSAETPFSKDGGLAVLKGNLALDGCIVKTAGVDESILKFTGPARVFESQDASVKAILSNEIKAGDVVVIRYEGPRGGPGMQEMLYPTSYLKSKGLGKACALVTDGRFSGGTSGLSIGHASPEAAEGGTIGLVQEGDTIEIDIPNRTIRLAVSDAELDSRRAAMEAKGALAWKPEEKRKRKVTTALRAYAAFATSADKGAVRHVPE</sequence>
<accession>Q98BZ8</accession>
<organism>
    <name type="scientific">Mesorhizobium japonicum (strain LMG 29417 / CECT 9101 / MAFF 303099)</name>
    <name type="common">Mesorhizobium loti (strain MAFF 303099)</name>
    <dbReference type="NCBI Taxonomy" id="266835"/>
    <lineage>
        <taxon>Bacteria</taxon>
        <taxon>Pseudomonadati</taxon>
        <taxon>Pseudomonadota</taxon>
        <taxon>Alphaproteobacteria</taxon>
        <taxon>Hyphomicrobiales</taxon>
        <taxon>Phyllobacteriaceae</taxon>
        <taxon>Mesorhizobium</taxon>
    </lineage>
</organism>
<reference key="1">
    <citation type="journal article" date="2000" name="DNA Res.">
        <title>Complete genome structure of the nitrogen-fixing symbiotic bacterium Mesorhizobium loti.</title>
        <authorList>
            <person name="Kaneko T."/>
            <person name="Nakamura Y."/>
            <person name="Sato S."/>
            <person name="Asamizu E."/>
            <person name="Kato T."/>
            <person name="Sasamoto S."/>
            <person name="Watanabe A."/>
            <person name="Idesawa K."/>
            <person name="Ishikawa A."/>
            <person name="Kawashima K."/>
            <person name="Kimura T."/>
            <person name="Kishida Y."/>
            <person name="Kiyokawa C."/>
            <person name="Kohara M."/>
            <person name="Matsumoto M."/>
            <person name="Matsuno A."/>
            <person name="Mochizuki Y."/>
            <person name="Nakayama S."/>
            <person name="Nakazaki N."/>
            <person name="Shimpo S."/>
            <person name="Sugimoto M."/>
            <person name="Takeuchi C."/>
            <person name="Yamada M."/>
            <person name="Tabata S."/>
        </authorList>
    </citation>
    <scope>NUCLEOTIDE SEQUENCE [LARGE SCALE GENOMIC DNA]</scope>
    <source>
        <strain>LMG 29417 / CECT 9101 / MAFF 303099</strain>
    </source>
</reference>
<feature type="chain" id="PRO_0000103496" description="Dihydroxy-acid dehydratase 1">
    <location>
        <begin position="1"/>
        <end position="614"/>
    </location>
</feature>
<feature type="active site" description="Proton acceptor" evidence="1">
    <location>
        <position position="517"/>
    </location>
</feature>
<feature type="binding site" evidence="1">
    <location>
        <position position="81"/>
    </location>
    <ligand>
        <name>Mg(2+)</name>
        <dbReference type="ChEBI" id="CHEBI:18420"/>
    </ligand>
</feature>
<feature type="binding site" evidence="1">
    <location>
        <position position="122"/>
    </location>
    <ligand>
        <name>[2Fe-2S] cluster</name>
        <dbReference type="ChEBI" id="CHEBI:190135"/>
    </ligand>
</feature>
<feature type="binding site" evidence="1">
    <location>
        <position position="123"/>
    </location>
    <ligand>
        <name>Mg(2+)</name>
        <dbReference type="ChEBI" id="CHEBI:18420"/>
    </ligand>
</feature>
<feature type="binding site" description="via carbamate group" evidence="1">
    <location>
        <position position="124"/>
    </location>
    <ligand>
        <name>Mg(2+)</name>
        <dbReference type="ChEBI" id="CHEBI:18420"/>
    </ligand>
</feature>
<feature type="binding site" evidence="1">
    <location>
        <position position="195"/>
    </location>
    <ligand>
        <name>[2Fe-2S] cluster</name>
        <dbReference type="ChEBI" id="CHEBI:190135"/>
    </ligand>
</feature>
<feature type="binding site" evidence="1">
    <location>
        <position position="491"/>
    </location>
    <ligand>
        <name>Mg(2+)</name>
        <dbReference type="ChEBI" id="CHEBI:18420"/>
    </ligand>
</feature>
<feature type="modified residue" description="N6-carboxylysine" evidence="1">
    <location>
        <position position="124"/>
    </location>
</feature>
<name>ILVD1_RHILO</name>
<evidence type="ECO:0000255" key="1">
    <source>
        <dbReference type="HAMAP-Rule" id="MF_00012"/>
    </source>
</evidence>
<comment type="function">
    <text evidence="1">Functions in the biosynthesis of branched-chain amino acids. Catalyzes the dehydration of (2R,3R)-2,3-dihydroxy-3-methylpentanoate (2,3-dihydroxy-3-methylvalerate) into 2-oxo-3-methylpentanoate (2-oxo-3-methylvalerate) and of (2R)-2,3-dihydroxy-3-methylbutanoate (2,3-dihydroxyisovalerate) into 2-oxo-3-methylbutanoate (2-oxoisovalerate), the penultimate precursor to L-isoleucine and L-valine, respectively.</text>
</comment>
<comment type="catalytic activity">
    <reaction evidence="1">
        <text>(2R)-2,3-dihydroxy-3-methylbutanoate = 3-methyl-2-oxobutanoate + H2O</text>
        <dbReference type="Rhea" id="RHEA:24809"/>
        <dbReference type="ChEBI" id="CHEBI:11851"/>
        <dbReference type="ChEBI" id="CHEBI:15377"/>
        <dbReference type="ChEBI" id="CHEBI:49072"/>
        <dbReference type="EC" id="4.2.1.9"/>
    </reaction>
    <physiologicalReaction direction="left-to-right" evidence="1">
        <dbReference type="Rhea" id="RHEA:24810"/>
    </physiologicalReaction>
</comment>
<comment type="catalytic activity">
    <reaction evidence="1">
        <text>(2R,3R)-2,3-dihydroxy-3-methylpentanoate = (S)-3-methyl-2-oxopentanoate + H2O</text>
        <dbReference type="Rhea" id="RHEA:27694"/>
        <dbReference type="ChEBI" id="CHEBI:15377"/>
        <dbReference type="ChEBI" id="CHEBI:35146"/>
        <dbReference type="ChEBI" id="CHEBI:49258"/>
        <dbReference type="EC" id="4.2.1.9"/>
    </reaction>
    <physiologicalReaction direction="left-to-right" evidence="1">
        <dbReference type="Rhea" id="RHEA:27695"/>
    </physiologicalReaction>
</comment>
<comment type="cofactor">
    <cofactor evidence="1">
        <name>[2Fe-2S] cluster</name>
        <dbReference type="ChEBI" id="CHEBI:190135"/>
    </cofactor>
    <text evidence="1">Binds 1 [2Fe-2S] cluster per subunit. This cluster acts as a Lewis acid cofactor.</text>
</comment>
<comment type="cofactor">
    <cofactor evidence="1">
        <name>Mg(2+)</name>
        <dbReference type="ChEBI" id="CHEBI:18420"/>
    </cofactor>
</comment>
<comment type="pathway">
    <text evidence="1">Amino-acid biosynthesis; L-isoleucine biosynthesis; L-isoleucine from 2-oxobutanoate: step 3/4.</text>
</comment>
<comment type="pathway">
    <text evidence="1">Amino-acid biosynthesis; L-valine biosynthesis; L-valine from pyruvate: step 3/4.</text>
</comment>
<comment type="subunit">
    <text evidence="1">Homodimer.</text>
</comment>
<comment type="similarity">
    <text evidence="1">Belongs to the IlvD/Edd family.</text>
</comment>
<proteinExistence type="inferred from homology"/>
<keyword id="KW-0001">2Fe-2S</keyword>
<keyword id="KW-0028">Amino-acid biosynthesis</keyword>
<keyword id="KW-0100">Branched-chain amino acid biosynthesis</keyword>
<keyword id="KW-0408">Iron</keyword>
<keyword id="KW-0411">Iron-sulfur</keyword>
<keyword id="KW-0456">Lyase</keyword>
<keyword id="KW-0460">Magnesium</keyword>
<keyword id="KW-0479">Metal-binding</keyword>